<keyword id="KW-0963">Cytoplasm</keyword>
<keyword id="KW-0664">Pyridoxine biosynthesis</keyword>
<keyword id="KW-1185">Reference proteome</keyword>
<keyword id="KW-0808">Transferase</keyword>
<reference key="1">
    <citation type="journal article" date="2003" name="Nat. Genet.">
        <title>Comparative analysis of the genome sequences of Bordetella pertussis, Bordetella parapertussis and Bordetella bronchiseptica.</title>
        <authorList>
            <person name="Parkhill J."/>
            <person name="Sebaihia M."/>
            <person name="Preston A."/>
            <person name="Murphy L.D."/>
            <person name="Thomson N.R."/>
            <person name="Harris D.E."/>
            <person name="Holden M.T.G."/>
            <person name="Churcher C.M."/>
            <person name="Bentley S.D."/>
            <person name="Mungall K.L."/>
            <person name="Cerdeno-Tarraga A.-M."/>
            <person name="Temple L."/>
            <person name="James K.D."/>
            <person name="Harris B."/>
            <person name="Quail M.A."/>
            <person name="Achtman M."/>
            <person name="Atkin R."/>
            <person name="Baker S."/>
            <person name="Basham D."/>
            <person name="Bason N."/>
            <person name="Cherevach I."/>
            <person name="Chillingworth T."/>
            <person name="Collins M."/>
            <person name="Cronin A."/>
            <person name="Davis P."/>
            <person name="Doggett J."/>
            <person name="Feltwell T."/>
            <person name="Goble A."/>
            <person name="Hamlin N."/>
            <person name="Hauser H."/>
            <person name="Holroyd S."/>
            <person name="Jagels K."/>
            <person name="Leather S."/>
            <person name="Moule S."/>
            <person name="Norberczak H."/>
            <person name="O'Neil S."/>
            <person name="Ormond D."/>
            <person name="Price C."/>
            <person name="Rabbinowitsch E."/>
            <person name="Rutter S."/>
            <person name="Sanders M."/>
            <person name="Saunders D."/>
            <person name="Seeger K."/>
            <person name="Sharp S."/>
            <person name="Simmonds M."/>
            <person name="Skelton J."/>
            <person name="Squares R."/>
            <person name="Squares S."/>
            <person name="Stevens K."/>
            <person name="Unwin L."/>
            <person name="Whitehead S."/>
            <person name="Barrell B.G."/>
            <person name="Maskell D.J."/>
        </authorList>
    </citation>
    <scope>NUCLEOTIDE SEQUENCE [LARGE SCALE GENOMIC DNA]</scope>
    <source>
        <strain>Tohama I / ATCC BAA-589 / NCTC 13251</strain>
    </source>
</reference>
<organism>
    <name type="scientific">Bordetella pertussis (strain Tohama I / ATCC BAA-589 / NCTC 13251)</name>
    <dbReference type="NCBI Taxonomy" id="257313"/>
    <lineage>
        <taxon>Bacteria</taxon>
        <taxon>Pseudomonadati</taxon>
        <taxon>Pseudomonadota</taxon>
        <taxon>Betaproteobacteria</taxon>
        <taxon>Burkholderiales</taxon>
        <taxon>Alcaligenaceae</taxon>
        <taxon>Bordetella</taxon>
    </lineage>
</organism>
<sequence length="248" mass="26522">MIELGVNIDHVATLRQQRHTAYPDPVQAALRAEDAGADLITLHLREDRRHIQDADVYAIRPLLRTRMNLECAVTPEMLEIACAVKPSDVCLVPEKRTELTTEGGLDVAGAQAAVTDAVQLLAEAGIRVSLFIDPDARQIEAAARAGAPVIELHTGAYAEARDDAAVQAELARVRAAVAEGLRHGLRVNAGHGLHYGNVQAVAALDGIAELNIGHAIVAQSIFDGWDKAVRDMKALMVQARLAAVRGHA</sequence>
<accession>Q7VWW0</accession>
<evidence type="ECO:0000255" key="1">
    <source>
        <dbReference type="HAMAP-Rule" id="MF_00279"/>
    </source>
</evidence>
<dbReference type="EC" id="2.6.99.2" evidence="1"/>
<dbReference type="EMBL" id="BX640417">
    <property type="protein sequence ID" value="CAE42356.1"/>
    <property type="molecule type" value="Genomic_DNA"/>
</dbReference>
<dbReference type="RefSeq" id="NP_880740.1">
    <property type="nucleotide sequence ID" value="NC_002929.2"/>
</dbReference>
<dbReference type="RefSeq" id="WP_003810344.1">
    <property type="nucleotide sequence ID" value="NZ_CP039022.1"/>
</dbReference>
<dbReference type="SMR" id="Q7VWW0"/>
<dbReference type="STRING" id="257313.BP2078"/>
<dbReference type="PaxDb" id="257313-BP2078"/>
<dbReference type="GeneID" id="93203526"/>
<dbReference type="KEGG" id="bpe:BP2078"/>
<dbReference type="PATRIC" id="fig|257313.5.peg.2234"/>
<dbReference type="eggNOG" id="COG0854">
    <property type="taxonomic scope" value="Bacteria"/>
</dbReference>
<dbReference type="HOGENOM" id="CLU_074563_0_0_4"/>
<dbReference type="UniPathway" id="UPA00244">
    <property type="reaction ID" value="UER00313"/>
</dbReference>
<dbReference type="Proteomes" id="UP000002676">
    <property type="component" value="Chromosome"/>
</dbReference>
<dbReference type="GO" id="GO:0005829">
    <property type="term" value="C:cytosol"/>
    <property type="evidence" value="ECO:0007669"/>
    <property type="project" value="TreeGrafter"/>
</dbReference>
<dbReference type="GO" id="GO:0033856">
    <property type="term" value="F:pyridoxine 5'-phosphate synthase activity"/>
    <property type="evidence" value="ECO:0007669"/>
    <property type="project" value="UniProtKB-EC"/>
</dbReference>
<dbReference type="GO" id="GO:0008615">
    <property type="term" value="P:pyridoxine biosynthetic process"/>
    <property type="evidence" value="ECO:0007669"/>
    <property type="project" value="UniProtKB-UniRule"/>
</dbReference>
<dbReference type="CDD" id="cd00003">
    <property type="entry name" value="PNPsynthase"/>
    <property type="match status" value="1"/>
</dbReference>
<dbReference type="FunFam" id="3.20.20.70:FF:000042">
    <property type="entry name" value="Pyridoxine 5'-phosphate synthase"/>
    <property type="match status" value="1"/>
</dbReference>
<dbReference type="Gene3D" id="3.20.20.70">
    <property type="entry name" value="Aldolase class I"/>
    <property type="match status" value="1"/>
</dbReference>
<dbReference type="HAMAP" id="MF_00279">
    <property type="entry name" value="PdxJ"/>
    <property type="match status" value="1"/>
</dbReference>
<dbReference type="InterPro" id="IPR013785">
    <property type="entry name" value="Aldolase_TIM"/>
</dbReference>
<dbReference type="InterPro" id="IPR004569">
    <property type="entry name" value="PyrdxlP_synth_PdxJ"/>
</dbReference>
<dbReference type="InterPro" id="IPR036130">
    <property type="entry name" value="Pyridoxine-5'_phos_synth"/>
</dbReference>
<dbReference type="NCBIfam" id="TIGR00559">
    <property type="entry name" value="pdxJ"/>
    <property type="match status" value="1"/>
</dbReference>
<dbReference type="NCBIfam" id="NF003623">
    <property type="entry name" value="PRK05265.1-1"/>
    <property type="match status" value="1"/>
</dbReference>
<dbReference type="NCBIfam" id="NF003625">
    <property type="entry name" value="PRK05265.1-3"/>
    <property type="match status" value="1"/>
</dbReference>
<dbReference type="NCBIfam" id="NF003627">
    <property type="entry name" value="PRK05265.1-5"/>
    <property type="match status" value="1"/>
</dbReference>
<dbReference type="PANTHER" id="PTHR30456">
    <property type="entry name" value="PYRIDOXINE 5'-PHOSPHATE SYNTHASE"/>
    <property type="match status" value="1"/>
</dbReference>
<dbReference type="PANTHER" id="PTHR30456:SF0">
    <property type="entry name" value="PYRIDOXINE 5'-PHOSPHATE SYNTHASE"/>
    <property type="match status" value="1"/>
</dbReference>
<dbReference type="Pfam" id="PF03740">
    <property type="entry name" value="PdxJ"/>
    <property type="match status" value="1"/>
</dbReference>
<dbReference type="SUPFAM" id="SSF63892">
    <property type="entry name" value="Pyridoxine 5'-phosphate synthase"/>
    <property type="match status" value="1"/>
</dbReference>
<name>PDXJ_BORPE</name>
<gene>
    <name evidence="1" type="primary">pdxJ</name>
    <name type="ordered locus">BP2078</name>
</gene>
<comment type="function">
    <text evidence="1">Catalyzes the complicated ring closure reaction between the two acyclic compounds 1-deoxy-D-xylulose-5-phosphate (DXP) and 3-amino-2-oxopropyl phosphate (1-amino-acetone-3-phosphate or AAP) to form pyridoxine 5'-phosphate (PNP) and inorganic phosphate.</text>
</comment>
<comment type="catalytic activity">
    <reaction evidence="1">
        <text>3-amino-2-oxopropyl phosphate + 1-deoxy-D-xylulose 5-phosphate = pyridoxine 5'-phosphate + phosphate + 2 H2O + H(+)</text>
        <dbReference type="Rhea" id="RHEA:15265"/>
        <dbReference type="ChEBI" id="CHEBI:15377"/>
        <dbReference type="ChEBI" id="CHEBI:15378"/>
        <dbReference type="ChEBI" id="CHEBI:43474"/>
        <dbReference type="ChEBI" id="CHEBI:57279"/>
        <dbReference type="ChEBI" id="CHEBI:57792"/>
        <dbReference type="ChEBI" id="CHEBI:58589"/>
        <dbReference type="EC" id="2.6.99.2"/>
    </reaction>
</comment>
<comment type="pathway">
    <text evidence="1">Cofactor biosynthesis; pyridoxine 5'-phosphate biosynthesis; pyridoxine 5'-phosphate from D-erythrose 4-phosphate: step 5/5.</text>
</comment>
<comment type="subunit">
    <text evidence="1">Homooctamer; tetramer of dimers.</text>
</comment>
<comment type="subcellular location">
    <subcellularLocation>
        <location evidence="1">Cytoplasm</location>
    </subcellularLocation>
</comment>
<comment type="similarity">
    <text evidence="1">Belongs to the PNP synthase family.</text>
</comment>
<feature type="chain" id="PRO_0000231789" description="Pyridoxine 5'-phosphate synthase">
    <location>
        <begin position="1"/>
        <end position="248"/>
    </location>
</feature>
<feature type="active site" description="Proton acceptor" evidence="1">
    <location>
        <position position="43"/>
    </location>
</feature>
<feature type="active site" description="Proton acceptor" evidence="1">
    <location>
        <position position="70"/>
    </location>
</feature>
<feature type="active site" description="Proton donor" evidence="1">
    <location>
        <position position="191"/>
    </location>
</feature>
<feature type="binding site" evidence="1">
    <location>
        <position position="7"/>
    </location>
    <ligand>
        <name>3-amino-2-oxopropyl phosphate</name>
        <dbReference type="ChEBI" id="CHEBI:57279"/>
    </ligand>
</feature>
<feature type="binding site" evidence="1">
    <location>
        <begin position="9"/>
        <end position="10"/>
    </location>
    <ligand>
        <name>1-deoxy-D-xylulose 5-phosphate</name>
        <dbReference type="ChEBI" id="CHEBI:57792"/>
    </ligand>
</feature>
<feature type="binding site" evidence="1">
    <location>
        <position position="18"/>
    </location>
    <ligand>
        <name>3-amino-2-oxopropyl phosphate</name>
        <dbReference type="ChEBI" id="CHEBI:57279"/>
    </ligand>
</feature>
<feature type="binding site" evidence="1">
    <location>
        <position position="45"/>
    </location>
    <ligand>
        <name>1-deoxy-D-xylulose 5-phosphate</name>
        <dbReference type="ChEBI" id="CHEBI:57792"/>
    </ligand>
</feature>
<feature type="binding site" evidence="1">
    <location>
        <position position="50"/>
    </location>
    <ligand>
        <name>1-deoxy-D-xylulose 5-phosphate</name>
        <dbReference type="ChEBI" id="CHEBI:57792"/>
    </ligand>
</feature>
<feature type="binding site" evidence="1">
    <location>
        <position position="100"/>
    </location>
    <ligand>
        <name>1-deoxy-D-xylulose 5-phosphate</name>
        <dbReference type="ChEBI" id="CHEBI:57792"/>
    </ligand>
</feature>
<feature type="binding site" evidence="1">
    <location>
        <position position="192"/>
    </location>
    <ligand>
        <name>3-amino-2-oxopropyl phosphate</name>
        <dbReference type="ChEBI" id="CHEBI:57279"/>
    </ligand>
</feature>
<feature type="binding site" evidence="1">
    <location>
        <begin position="213"/>
        <end position="214"/>
    </location>
    <ligand>
        <name>3-amino-2-oxopropyl phosphate</name>
        <dbReference type="ChEBI" id="CHEBI:57279"/>
    </ligand>
</feature>
<feature type="site" description="Transition state stabilizer" evidence="1">
    <location>
        <position position="151"/>
    </location>
</feature>
<proteinExistence type="inferred from homology"/>
<protein>
    <recommendedName>
        <fullName evidence="1">Pyridoxine 5'-phosphate synthase</fullName>
        <shortName evidence="1">PNP synthase</shortName>
        <ecNumber evidence="1">2.6.99.2</ecNumber>
    </recommendedName>
</protein>